<keyword id="KW-0963">Cytoplasm</keyword>
<keyword id="KW-0570">Pentose shunt</keyword>
<keyword id="KW-1185">Reference proteome</keyword>
<keyword id="KW-0704">Schiff base</keyword>
<keyword id="KW-0808">Transferase</keyword>
<name>TAL_BUCCC</name>
<sequence>MNQLEYLKKYTTVVVDSGDINYIKKYQPNDATTNPTLILKSVLSNKYNYIIDNSIQYAKDIGGNKLTQVKNASDMISVGFGIEILKYIPGYISTEIDARLSFNTKKCVSKAIKLIKLYNNNGIDTSRVLIKLAATWECIEAARQLKKIGILCNLTLLFSFAQARACADADVFLISPFVGRIYDWYQKFNLNSPYCSNTDPGVIALKKIFFYYKKYGYKTIIMGASFRKLEQIQELVGCDRITISLDLLKQLSMKKDILIKKLDVKKITKVNTKPNALSESEFRFLHNEDAMAVEKLSEGIRQFSSDQQELENFLFDKL</sequence>
<proteinExistence type="inferred from homology"/>
<organism>
    <name type="scientific">Buchnera aphidicola subsp. Cinara cedri (strain Cc)</name>
    <dbReference type="NCBI Taxonomy" id="372461"/>
    <lineage>
        <taxon>Bacteria</taxon>
        <taxon>Pseudomonadati</taxon>
        <taxon>Pseudomonadota</taxon>
        <taxon>Gammaproteobacteria</taxon>
        <taxon>Enterobacterales</taxon>
        <taxon>Erwiniaceae</taxon>
        <taxon>Buchnera</taxon>
    </lineage>
</organism>
<accession>Q058B4</accession>
<protein>
    <recommendedName>
        <fullName evidence="2">Transaldolase</fullName>
        <ecNumber evidence="2">2.2.1.2</ecNumber>
    </recommendedName>
</protein>
<feature type="chain" id="PRO_1000014486" description="Transaldolase">
    <location>
        <begin position="1"/>
        <end position="318"/>
    </location>
</feature>
<feature type="active site" description="Schiff-base intermediate with substrate" evidence="2">
    <location>
        <position position="131"/>
    </location>
</feature>
<evidence type="ECO:0000250" key="1"/>
<evidence type="ECO:0000255" key="2">
    <source>
        <dbReference type="HAMAP-Rule" id="MF_00492"/>
    </source>
</evidence>
<gene>
    <name evidence="2" type="primary">tal</name>
    <name type="ordered locus">BCc_057</name>
</gene>
<reference key="1">
    <citation type="journal article" date="2006" name="Science">
        <title>A small microbial genome: the end of a long symbiotic relationship?</title>
        <authorList>
            <person name="Perez-Brocal V."/>
            <person name="Gil R."/>
            <person name="Ramos S."/>
            <person name="Lamelas A."/>
            <person name="Postigo M."/>
            <person name="Michelena J.M."/>
            <person name="Silva F.J."/>
            <person name="Moya A."/>
            <person name="Latorre A."/>
        </authorList>
    </citation>
    <scope>NUCLEOTIDE SEQUENCE [LARGE SCALE GENOMIC DNA]</scope>
    <source>
        <strain>Cc</strain>
    </source>
</reference>
<dbReference type="EC" id="2.2.1.2" evidence="2"/>
<dbReference type="EMBL" id="CP000263">
    <property type="protein sequence ID" value="ABJ90535.1"/>
    <property type="molecule type" value="Genomic_DNA"/>
</dbReference>
<dbReference type="RefSeq" id="WP_011672454.1">
    <property type="nucleotide sequence ID" value="NC_008513.1"/>
</dbReference>
<dbReference type="SMR" id="Q058B4"/>
<dbReference type="STRING" id="372461.BCc_057"/>
<dbReference type="KEGG" id="bcc:BCc_057"/>
<dbReference type="eggNOG" id="COG0176">
    <property type="taxonomic scope" value="Bacteria"/>
</dbReference>
<dbReference type="HOGENOM" id="CLU_047470_0_1_6"/>
<dbReference type="OrthoDB" id="9809101at2"/>
<dbReference type="UniPathway" id="UPA00115">
    <property type="reaction ID" value="UER00414"/>
</dbReference>
<dbReference type="Proteomes" id="UP000000669">
    <property type="component" value="Chromosome"/>
</dbReference>
<dbReference type="GO" id="GO:0005829">
    <property type="term" value="C:cytosol"/>
    <property type="evidence" value="ECO:0007669"/>
    <property type="project" value="TreeGrafter"/>
</dbReference>
<dbReference type="GO" id="GO:0004801">
    <property type="term" value="F:transaldolase activity"/>
    <property type="evidence" value="ECO:0000250"/>
    <property type="project" value="UniProtKB"/>
</dbReference>
<dbReference type="GO" id="GO:0005975">
    <property type="term" value="P:carbohydrate metabolic process"/>
    <property type="evidence" value="ECO:0007669"/>
    <property type="project" value="InterPro"/>
</dbReference>
<dbReference type="GO" id="GO:0006098">
    <property type="term" value="P:pentose-phosphate shunt"/>
    <property type="evidence" value="ECO:0007669"/>
    <property type="project" value="UniProtKB-UniRule"/>
</dbReference>
<dbReference type="CDD" id="cd00957">
    <property type="entry name" value="Transaldolase_TalAB"/>
    <property type="match status" value="1"/>
</dbReference>
<dbReference type="FunFam" id="3.20.20.70:FF:000131">
    <property type="entry name" value="Transaldolase"/>
    <property type="match status" value="1"/>
</dbReference>
<dbReference type="Gene3D" id="3.20.20.70">
    <property type="entry name" value="Aldolase class I"/>
    <property type="match status" value="1"/>
</dbReference>
<dbReference type="HAMAP" id="MF_00492">
    <property type="entry name" value="Transaldolase_1"/>
    <property type="match status" value="1"/>
</dbReference>
<dbReference type="InterPro" id="IPR013785">
    <property type="entry name" value="Aldolase_TIM"/>
</dbReference>
<dbReference type="InterPro" id="IPR001585">
    <property type="entry name" value="TAL/FSA"/>
</dbReference>
<dbReference type="InterPro" id="IPR004730">
    <property type="entry name" value="Transaldolase_1"/>
</dbReference>
<dbReference type="InterPro" id="IPR018225">
    <property type="entry name" value="Transaldolase_AS"/>
</dbReference>
<dbReference type="NCBIfam" id="NF009001">
    <property type="entry name" value="PRK12346.1"/>
    <property type="match status" value="1"/>
</dbReference>
<dbReference type="NCBIfam" id="TIGR00874">
    <property type="entry name" value="talAB"/>
    <property type="match status" value="1"/>
</dbReference>
<dbReference type="PANTHER" id="PTHR10683">
    <property type="entry name" value="TRANSALDOLASE"/>
    <property type="match status" value="1"/>
</dbReference>
<dbReference type="PANTHER" id="PTHR10683:SF16">
    <property type="entry name" value="TRANSALDOLASE A"/>
    <property type="match status" value="1"/>
</dbReference>
<dbReference type="Pfam" id="PF00923">
    <property type="entry name" value="TAL_FSA"/>
    <property type="match status" value="1"/>
</dbReference>
<dbReference type="SUPFAM" id="SSF51569">
    <property type="entry name" value="Aldolase"/>
    <property type="match status" value="1"/>
</dbReference>
<dbReference type="PROSITE" id="PS01054">
    <property type="entry name" value="TRANSALDOLASE_1"/>
    <property type="match status" value="1"/>
</dbReference>
<dbReference type="PROSITE" id="PS00958">
    <property type="entry name" value="TRANSALDOLASE_2"/>
    <property type="match status" value="1"/>
</dbReference>
<comment type="function">
    <text evidence="2">Transaldolase is important for the balance of metabolites in the pentose-phosphate pathway.</text>
</comment>
<comment type="catalytic activity">
    <reaction evidence="2">
        <text>D-sedoheptulose 7-phosphate + D-glyceraldehyde 3-phosphate = D-erythrose 4-phosphate + beta-D-fructose 6-phosphate</text>
        <dbReference type="Rhea" id="RHEA:17053"/>
        <dbReference type="ChEBI" id="CHEBI:16897"/>
        <dbReference type="ChEBI" id="CHEBI:57483"/>
        <dbReference type="ChEBI" id="CHEBI:57634"/>
        <dbReference type="ChEBI" id="CHEBI:59776"/>
        <dbReference type="EC" id="2.2.1.2"/>
    </reaction>
</comment>
<comment type="pathway">
    <text evidence="2">Carbohydrate degradation; pentose phosphate pathway; D-glyceraldehyde 3-phosphate and beta-D-fructose 6-phosphate from D-ribose 5-phosphate and D-xylulose 5-phosphate (non-oxidative stage): step 2/3.</text>
</comment>
<comment type="subunit">
    <text evidence="1">Homodimer.</text>
</comment>
<comment type="subcellular location">
    <subcellularLocation>
        <location evidence="2">Cytoplasm</location>
    </subcellularLocation>
</comment>
<comment type="similarity">
    <text evidence="2">Belongs to the transaldolase family. Type 1 subfamily.</text>
</comment>